<evidence type="ECO:0000255" key="1">
    <source>
        <dbReference type="HAMAP-Rule" id="MF_01407"/>
    </source>
</evidence>
<name>CDC6_METB6</name>
<proteinExistence type="inferred from homology"/>
<accession>A7I464</accession>
<dbReference type="EMBL" id="CP000780">
    <property type="protein sequence ID" value="ABS54525.1"/>
    <property type="molecule type" value="Genomic_DNA"/>
</dbReference>
<dbReference type="RefSeq" id="WP_011991013.1">
    <property type="nucleotide sequence ID" value="NC_009712.1"/>
</dbReference>
<dbReference type="SMR" id="A7I464"/>
<dbReference type="STRING" id="456442.Mboo_0001"/>
<dbReference type="GeneID" id="5411407"/>
<dbReference type="KEGG" id="mbn:Mboo_0001"/>
<dbReference type="eggNOG" id="arCOG00467">
    <property type="taxonomic scope" value="Archaea"/>
</dbReference>
<dbReference type="HOGENOM" id="CLU_025112_3_1_2"/>
<dbReference type="OrthoDB" id="195574at2157"/>
<dbReference type="Proteomes" id="UP000002408">
    <property type="component" value="Chromosome"/>
</dbReference>
<dbReference type="GO" id="GO:0005524">
    <property type="term" value="F:ATP binding"/>
    <property type="evidence" value="ECO:0007669"/>
    <property type="project" value="UniProtKB-UniRule"/>
</dbReference>
<dbReference type="GO" id="GO:0016887">
    <property type="term" value="F:ATP hydrolysis activity"/>
    <property type="evidence" value="ECO:0007669"/>
    <property type="project" value="InterPro"/>
</dbReference>
<dbReference type="GO" id="GO:0006260">
    <property type="term" value="P:DNA replication"/>
    <property type="evidence" value="ECO:0007669"/>
    <property type="project" value="UniProtKB-UniRule"/>
</dbReference>
<dbReference type="CDD" id="cd00009">
    <property type="entry name" value="AAA"/>
    <property type="match status" value="1"/>
</dbReference>
<dbReference type="CDD" id="cd08768">
    <property type="entry name" value="Cdc6_C"/>
    <property type="match status" value="1"/>
</dbReference>
<dbReference type="FunFam" id="1.10.8.60:FF:000073">
    <property type="entry name" value="ORC1-type DNA replication protein"/>
    <property type="match status" value="1"/>
</dbReference>
<dbReference type="FunFam" id="3.40.50.300:FF:000930">
    <property type="entry name" value="ORC1-type DNA replication protein"/>
    <property type="match status" value="1"/>
</dbReference>
<dbReference type="Gene3D" id="1.10.8.60">
    <property type="match status" value="1"/>
</dbReference>
<dbReference type="Gene3D" id="3.40.50.300">
    <property type="entry name" value="P-loop containing nucleotide triphosphate hydrolases"/>
    <property type="match status" value="1"/>
</dbReference>
<dbReference type="Gene3D" id="1.10.10.10">
    <property type="entry name" value="Winged helix-like DNA-binding domain superfamily/Winged helix DNA-binding domain"/>
    <property type="match status" value="1"/>
</dbReference>
<dbReference type="HAMAP" id="MF_01407">
    <property type="entry name" value="ORC1_type_DNA_replic_protein"/>
    <property type="match status" value="1"/>
</dbReference>
<dbReference type="InterPro" id="IPR003593">
    <property type="entry name" value="AAA+_ATPase"/>
</dbReference>
<dbReference type="InterPro" id="IPR041664">
    <property type="entry name" value="AAA_16"/>
</dbReference>
<dbReference type="InterPro" id="IPR015163">
    <property type="entry name" value="Cdc6_C"/>
</dbReference>
<dbReference type="InterPro" id="IPR055237">
    <property type="entry name" value="Cdc6_lid"/>
</dbReference>
<dbReference type="InterPro" id="IPR050311">
    <property type="entry name" value="ORC1/CDC6"/>
</dbReference>
<dbReference type="InterPro" id="IPR014277">
    <property type="entry name" value="Orc1/Cdc6_arc"/>
</dbReference>
<dbReference type="InterPro" id="IPR027417">
    <property type="entry name" value="P-loop_NTPase"/>
</dbReference>
<dbReference type="InterPro" id="IPR036388">
    <property type="entry name" value="WH-like_DNA-bd_sf"/>
</dbReference>
<dbReference type="InterPro" id="IPR036390">
    <property type="entry name" value="WH_DNA-bd_sf"/>
</dbReference>
<dbReference type="NCBIfam" id="TIGR02928">
    <property type="entry name" value="orc1/cdc6 family replication initiation protein"/>
    <property type="match status" value="1"/>
</dbReference>
<dbReference type="NCBIfam" id="NF001625">
    <property type="entry name" value="PRK00411.1-3"/>
    <property type="match status" value="1"/>
</dbReference>
<dbReference type="PANTHER" id="PTHR10763">
    <property type="entry name" value="CELL DIVISION CONTROL PROTEIN 6-RELATED"/>
    <property type="match status" value="1"/>
</dbReference>
<dbReference type="PANTHER" id="PTHR10763:SF22">
    <property type="entry name" value="ORC1-TYPE DNA REPLICATION PROTEIN"/>
    <property type="match status" value="1"/>
</dbReference>
<dbReference type="Pfam" id="PF13191">
    <property type="entry name" value="AAA_16"/>
    <property type="match status" value="1"/>
</dbReference>
<dbReference type="Pfam" id="PF09079">
    <property type="entry name" value="Cdc6_C"/>
    <property type="match status" value="1"/>
</dbReference>
<dbReference type="Pfam" id="PF22703">
    <property type="entry name" value="Cdc6_lid"/>
    <property type="match status" value="1"/>
</dbReference>
<dbReference type="SMART" id="SM00382">
    <property type="entry name" value="AAA"/>
    <property type="match status" value="1"/>
</dbReference>
<dbReference type="SMART" id="SM01074">
    <property type="entry name" value="Cdc6_C"/>
    <property type="match status" value="1"/>
</dbReference>
<dbReference type="SUPFAM" id="SSF52540">
    <property type="entry name" value="P-loop containing nucleoside triphosphate hydrolases"/>
    <property type="match status" value="1"/>
</dbReference>
<dbReference type="SUPFAM" id="SSF46785">
    <property type="entry name" value="Winged helix' DNA-binding domain"/>
    <property type="match status" value="1"/>
</dbReference>
<gene>
    <name type="primary">cdc6</name>
    <name type="ordered locus">Mboo_0001</name>
</gene>
<comment type="function">
    <text evidence="1">Involved in regulation of DNA replication.</text>
</comment>
<comment type="similarity">
    <text evidence="1">Belongs to the CDC6/cdc18 family.</text>
</comment>
<sequence length="430" mass="48096">MPETEDPATGLFIKYLSNNRIFRDREVLRHSYRPQILPHRQPQIDTIASILAPSLRNETPSNILIYGKTGTGKTASVRYVGSELEKASSTMGTTCRIVHLNCEVIDTQYRVLAQIAKCIDDVDEASSDKAKIHIPMTGWPTDQVYSELKNQLDTGGGVLVIVLDEIDKLVKKSGDDTLYNLTRINSDLKNSKVSIIGISNDLSFKDFLDPRVLSSLSEEEIVFPPYNAPQLVDILTQRAAGAFLDGAIADGVIPLCSALAAQEHGDARRALDLLRISGELADRDESKQVTDVHVKQAQAKIETDSMIECIATLPTQSKLILFSMLTLEQLGQNIFTSGEVSRVYQDIAPEIQLDILTHRRITDLISELNMLGVINTRVVSRGRYGRTKEMWFDANTGKIREVVLKDPRLNGLKDLDINQMETKWLKTWFR</sequence>
<reference key="1">
    <citation type="journal article" date="2015" name="Microbiology">
        <title>Genome of Methanoregula boonei 6A8 reveals adaptations to oligotrophic peatland environments.</title>
        <authorList>
            <person name="Braeuer S."/>
            <person name="Cadillo-Quiroz H."/>
            <person name="Kyrpides N."/>
            <person name="Woyke T."/>
            <person name="Goodwin L."/>
            <person name="Detter C."/>
            <person name="Podell S."/>
            <person name="Yavitt J.B."/>
            <person name="Zinder S.H."/>
        </authorList>
    </citation>
    <scope>NUCLEOTIDE SEQUENCE [LARGE SCALE GENOMIC DNA]</scope>
    <source>
        <strain>DSM 21154 / JCM 14090 / 6A8</strain>
    </source>
</reference>
<keyword id="KW-0067">ATP-binding</keyword>
<keyword id="KW-0235">DNA replication</keyword>
<keyword id="KW-0547">Nucleotide-binding</keyword>
<keyword id="KW-1185">Reference proteome</keyword>
<protein>
    <recommendedName>
        <fullName evidence="1">ORC1-type DNA replication protein</fullName>
    </recommendedName>
</protein>
<feature type="chain" id="PRO_1000068438" description="ORC1-type DNA replication protein">
    <location>
        <begin position="1"/>
        <end position="430"/>
    </location>
</feature>
<feature type="binding site" evidence="1">
    <location>
        <begin position="71"/>
        <end position="75"/>
    </location>
    <ligand>
        <name>ATP</name>
        <dbReference type="ChEBI" id="CHEBI:30616"/>
    </ligand>
</feature>
<feature type="binding site" evidence="1">
    <location>
        <position position="226"/>
    </location>
    <ligand>
        <name>ATP</name>
        <dbReference type="ChEBI" id="CHEBI:30616"/>
    </ligand>
</feature>
<feature type="binding site" evidence="1">
    <location>
        <position position="238"/>
    </location>
    <ligand>
        <name>ATP</name>
        <dbReference type="ChEBI" id="CHEBI:30616"/>
    </ligand>
</feature>
<organism>
    <name type="scientific">Methanoregula boonei (strain DSM 21154 / JCM 14090 / 6A8)</name>
    <dbReference type="NCBI Taxonomy" id="456442"/>
    <lineage>
        <taxon>Archaea</taxon>
        <taxon>Methanobacteriati</taxon>
        <taxon>Methanobacteriota</taxon>
        <taxon>Stenosarchaea group</taxon>
        <taxon>Methanomicrobia</taxon>
        <taxon>Methanomicrobiales</taxon>
        <taxon>Methanoregulaceae</taxon>
        <taxon>Methanoregula</taxon>
    </lineage>
</organism>